<sequence>MIDIHSHIVFDVDDGPKSREESKALLAESYRQGVRTIVSTSHRRKGMFETPEEKIAENFLQVREIAKEVASDLVIAYGAEIYYTPDVLDKLEKKRIPTLNDSRYALIEFSMNTPYRDIHSALSKILMLGITPVIAHIERYDALENNEKRVRELIDMGCYTQVNSSHVLKPKLFGERYKFMKKRAQYFLEQDLVHVIASDMHNLDGRPPHMAEAYDLVTQKYGEAKAQELFIDNPRKIVMDQLI</sequence>
<keyword id="KW-0002">3D-structure</keyword>
<keyword id="KW-0972">Capsule biogenesis/degradation</keyword>
<keyword id="KW-0270">Exopolysaccharide synthesis</keyword>
<keyword id="KW-0378">Hydrolase</keyword>
<keyword id="KW-0464">Manganese</keyword>
<keyword id="KW-0904">Protein phosphatase</keyword>
<keyword id="KW-1185">Reference proteome</keyword>
<protein>
    <recommendedName>
        <fullName>Tyrosine-protein phosphatase CpsB</fullName>
        <ecNumber>3.1.3.48</ecNumber>
    </recommendedName>
</protein>
<accession>Q9AHD4</accession>
<gene>
    <name type="primary">cpsB</name>
    <name type="synonym">wzh</name>
    <name type="ordered locus">SP_0347</name>
</gene>
<evidence type="ECO:0000250" key="1"/>
<evidence type="ECO:0000305" key="2"/>
<evidence type="ECO:0007829" key="3">
    <source>
        <dbReference type="PDB" id="2WJE"/>
    </source>
</evidence>
<evidence type="ECO:0007829" key="4">
    <source>
        <dbReference type="PDB" id="3QY8"/>
    </source>
</evidence>
<reference key="1">
    <citation type="journal article" date="2001" name="Infect. Immun.">
        <title>Molecular characterization of Streptococcus pneumoniae type 4, 6B, 8, and 18C capsular polysaccharide gene clusters.</title>
        <authorList>
            <person name="Jiang S.-M."/>
            <person name="Wang L."/>
            <person name="Reeves P.R."/>
        </authorList>
    </citation>
    <scope>NUCLEOTIDE SEQUENCE [GENOMIC DNA]</scope>
    <source>
        <strain>WCH35 / Serotype 4</strain>
    </source>
</reference>
<reference key="2">
    <citation type="journal article" date="2001" name="Science">
        <title>Complete genome sequence of a virulent isolate of Streptococcus pneumoniae.</title>
        <authorList>
            <person name="Tettelin H."/>
            <person name="Nelson K.E."/>
            <person name="Paulsen I.T."/>
            <person name="Eisen J.A."/>
            <person name="Read T.D."/>
            <person name="Peterson S.N."/>
            <person name="Heidelberg J.F."/>
            <person name="DeBoy R.T."/>
            <person name="Haft D.H."/>
            <person name="Dodson R.J."/>
            <person name="Durkin A.S."/>
            <person name="Gwinn M.L."/>
            <person name="Kolonay J.F."/>
            <person name="Nelson W.C."/>
            <person name="Peterson J.D."/>
            <person name="Umayam L.A."/>
            <person name="White O."/>
            <person name="Salzberg S.L."/>
            <person name="Lewis M.R."/>
            <person name="Radune D."/>
            <person name="Holtzapple E.K."/>
            <person name="Khouri H.M."/>
            <person name="Wolf A.M."/>
            <person name="Utterback T.R."/>
            <person name="Hansen C.L."/>
            <person name="McDonald L.A."/>
            <person name="Feldblyum T.V."/>
            <person name="Angiuoli S.V."/>
            <person name="Dickinson T."/>
            <person name="Hickey E.K."/>
            <person name="Holt I.E."/>
            <person name="Loftus B.J."/>
            <person name="Yang F."/>
            <person name="Smith H.O."/>
            <person name="Venter J.C."/>
            <person name="Dougherty B.A."/>
            <person name="Morrison D.A."/>
            <person name="Hollingshead S.K."/>
            <person name="Fraser C.M."/>
        </authorList>
    </citation>
    <scope>NUCLEOTIDE SEQUENCE [LARGE SCALE GENOMIC DNA]</scope>
    <source>
        <strain>ATCC BAA-334 / TIGR4</strain>
    </source>
</reference>
<dbReference type="EC" id="3.1.3.48"/>
<dbReference type="EMBL" id="AF316639">
    <property type="protein sequence ID" value="AAK20667.1"/>
    <property type="molecule type" value="Genomic_DNA"/>
</dbReference>
<dbReference type="EMBL" id="AE005672">
    <property type="protein sequence ID" value="AAK74520.1"/>
    <property type="molecule type" value="Genomic_DNA"/>
</dbReference>
<dbReference type="PIR" id="G95040">
    <property type="entry name" value="G95040"/>
</dbReference>
<dbReference type="PDB" id="2WJD">
    <property type="method" value="X-ray"/>
    <property type="resolution" value="2.80 A"/>
    <property type="chains" value="A=1-243"/>
</dbReference>
<dbReference type="PDB" id="2WJE">
    <property type="method" value="X-ray"/>
    <property type="resolution" value="1.90 A"/>
    <property type="chains" value="A=1-243"/>
</dbReference>
<dbReference type="PDB" id="2WJF">
    <property type="method" value="X-ray"/>
    <property type="resolution" value="2.22 A"/>
    <property type="chains" value="A=1-243"/>
</dbReference>
<dbReference type="PDB" id="3QY8">
    <property type="method" value="X-ray"/>
    <property type="resolution" value="2.00 A"/>
    <property type="chains" value="A=1-243"/>
</dbReference>
<dbReference type="PDBsum" id="2WJD"/>
<dbReference type="PDBsum" id="2WJE"/>
<dbReference type="PDBsum" id="2WJF"/>
<dbReference type="PDBsum" id="3QY8"/>
<dbReference type="SMR" id="Q9AHD4"/>
<dbReference type="PaxDb" id="170187-SP_0347"/>
<dbReference type="EnsemblBacteria" id="AAK74520">
    <property type="protein sequence ID" value="AAK74520"/>
    <property type="gene ID" value="SP_0347"/>
</dbReference>
<dbReference type="KEGG" id="spn:SP_0347"/>
<dbReference type="eggNOG" id="COG4464">
    <property type="taxonomic scope" value="Bacteria"/>
</dbReference>
<dbReference type="PhylomeDB" id="Q9AHD4"/>
<dbReference type="BioCyc" id="SPNE170187:G1FZB-357-MONOMER"/>
<dbReference type="UniPathway" id="UPA00934"/>
<dbReference type="EvolutionaryTrace" id="Q9AHD4"/>
<dbReference type="Proteomes" id="UP000000585">
    <property type="component" value="Chromosome"/>
</dbReference>
<dbReference type="GO" id="GO:0030145">
    <property type="term" value="F:manganese ion binding"/>
    <property type="evidence" value="ECO:0007669"/>
    <property type="project" value="InterPro"/>
</dbReference>
<dbReference type="GO" id="GO:0004725">
    <property type="term" value="F:protein tyrosine phosphatase activity"/>
    <property type="evidence" value="ECO:0007669"/>
    <property type="project" value="UniProtKB-EC"/>
</dbReference>
<dbReference type="GO" id="GO:0045227">
    <property type="term" value="P:capsule polysaccharide biosynthetic process"/>
    <property type="evidence" value="ECO:0007669"/>
    <property type="project" value="UniProtKB-UniPathway"/>
</dbReference>
<dbReference type="Gene3D" id="3.20.20.140">
    <property type="entry name" value="Metal-dependent hydrolases"/>
    <property type="match status" value="1"/>
</dbReference>
<dbReference type="InterPro" id="IPR048208">
    <property type="entry name" value="Caps_polysacc_synth_CpsB"/>
</dbReference>
<dbReference type="InterPro" id="IPR016667">
    <property type="entry name" value="Caps_polysacc_synth_CpsB/CapC"/>
</dbReference>
<dbReference type="InterPro" id="IPR032466">
    <property type="entry name" value="Metal_Hydrolase"/>
</dbReference>
<dbReference type="NCBIfam" id="NF041488">
    <property type="entry name" value="caps_synth_Cps4B"/>
    <property type="match status" value="1"/>
</dbReference>
<dbReference type="PANTHER" id="PTHR39181">
    <property type="entry name" value="TYROSINE-PROTEIN PHOSPHATASE YWQE"/>
    <property type="match status" value="1"/>
</dbReference>
<dbReference type="PANTHER" id="PTHR39181:SF1">
    <property type="entry name" value="TYROSINE-PROTEIN PHOSPHATASE YWQE"/>
    <property type="match status" value="1"/>
</dbReference>
<dbReference type="Pfam" id="PF19567">
    <property type="entry name" value="CpsB_CapC"/>
    <property type="match status" value="1"/>
</dbReference>
<dbReference type="PIRSF" id="PIRSF016557">
    <property type="entry name" value="Caps_synth_CpsB"/>
    <property type="match status" value="1"/>
</dbReference>
<dbReference type="SUPFAM" id="SSF51556">
    <property type="entry name" value="Metallo-dependent hydrolases"/>
    <property type="match status" value="1"/>
</dbReference>
<comment type="function">
    <text evidence="1">Dephosphorylates CpsD. Involved in the regulation of capsular polysaccharide biosynthesis (By similarity).</text>
</comment>
<comment type="catalytic activity">
    <reaction>
        <text>O-phospho-L-tyrosyl-[protein] + H2O = L-tyrosyl-[protein] + phosphate</text>
        <dbReference type="Rhea" id="RHEA:10684"/>
        <dbReference type="Rhea" id="RHEA-COMP:10136"/>
        <dbReference type="Rhea" id="RHEA-COMP:20101"/>
        <dbReference type="ChEBI" id="CHEBI:15377"/>
        <dbReference type="ChEBI" id="CHEBI:43474"/>
        <dbReference type="ChEBI" id="CHEBI:46858"/>
        <dbReference type="ChEBI" id="CHEBI:61978"/>
        <dbReference type="EC" id="3.1.3.48"/>
    </reaction>
</comment>
<comment type="cofactor">
    <cofactor evidence="1">
        <name>Mn(2+)</name>
        <dbReference type="ChEBI" id="CHEBI:29035"/>
    </cofactor>
</comment>
<comment type="pathway">
    <text>Capsule biogenesis; capsule polysaccharide biosynthesis.</text>
</comment>
<comment type="similarity">
    <text evidence="2">Belongs to the metallo-dependent hydrolases superfamily. CpsB/CapC family.</text>
</comment>
<name>CPSB_STRPN</name>
<proteinExistence type="evidence at protein level"/>
<feature type="chain" id="PRO_0000057891" description="Tyrosine-protein phosphatase CpsB">
    <location>
        <begin position="1"/>
        <end position="243"/>
    </location>
</feature>
<feature type="strand" evidence="3">
    <location>
        <begin position="1"/>
        <end position="3"/>
    </location>
</feature>
<feature type="strand" evidence="3">
    <location>
        <begin position="12"/>
        <end position="15"/>
    </location>
</feature>
<feature type="helix" evidence="3">
    <location>
        <begin position="19"/>
        <end position="31"/>
    </location>
</feature>
<feature type="strand" evidence="3">
    <location>
        <begin position="34"/>
        <end position="38"/>
    </location>
</feature>
<feature type="strand" evidence="3">
    <location>
        <begin position="42"/>
        <end position="44"/>
    </location>
</feature>
<feature type="turn" evidence="3">
    <location>
        <begin position="45"/>
        <end position="47"/>
    </location>
</feature>
<feature type="helix" evidence="3">
    <location>
        <begin position="52"/>
        <end position="69"/>
    </location>
</feature>
<feature type="strand" evidence="3">
    <location>
        <begin position="74"/>
        <end position="76"/>
    </location>
</feature>
<feature type="strand" evidence="3">
    <location>
        <begin position="80"/>
        <end position="82"/>
    </location>
</feature>
<feature type="helix" evidence="3">
    <location>
        <begin position="87"/>
        <end position="92"/>
    </location>
</feature>
<feature type="helix" evidence="3">
    <location>
        <begin position="99"/>
        <end position="101"/>
    </location>
</feature>
<feature type="strand" evidence="3">
    <location>
        <begin position="102"/>
        <end position="108"/>
    </location>
</feature>
<feature type="helix" evidence="3">
    <location>
        <begin position="115"/>
        <end position="126"/>
    </location>
</feature>
<feature type="turn" evidence="3">
    <location>
        <begin position="127"/>
        <end position="129"/>
    </location>
</feature>
<feature type="strand" evidence="3">
    <location>
        <begin position="131"/>
        <end position="134"/>
    </location>
</feature>
<feature type="helix" evidence="3">
    <location>
        <begin position="137"/>
        <end position="139"/>
    </location>
</feature>
<feature type="helix" evidence="3">
    <location>
        <begin position="141"/>
        <end position="143"/>
    </location>
</feature>
<feature type="helix" evidence="3">
    <location>
        <begin position="147"/>
        <end position="155"/>
    </location>
</feature>
<feature type="strand" evidence="3">
    <location>
        <begin position="159"/>
        <end position="163"/>
    </location>
</feature>
<feature type="helix" evidence="3">
    <location>
        <begin position="164"/>
        <end position="167"/>
    </location>
</feature>
<feature type="strand" evidence="4">
    <location>
        <begin position="172"/>
        <end position="174"/>
    </location>
</feature>
<feature type="helix" evidence="3">
    <location>
        <begin position="178"/>
        <end position="189"/>
    </location>
</feature>
<feature type="strand" evidence="3">
    <location>
        <begin position="194"/>
        <end position="197"/>
    </location>
</feature>
<feature type="strand" evidence="3">
    <location>
        <begin position="203"/>
        <end position="206"/>
    </location>
</feature>
<feature type="helix" evidence="3">
    <location>
        <begin position="210"/>
        <end position="221"/>
    </location>
</feature>
<feature type="helix" evidence="3">
    <location>
        <begin position="223"/>
        <end position="230"/>
    </location>
</feature>
<feature type="helix" evidence="3">
    <location>
        <begin position="232"/>
        <end position="238"/>
    </location>
</feature>
<organism>
    <name type="scientific">Streptococcus pneumoniae serotype 4 (strain ATCC BAA-334 / TIGR4)</name>
    <dbReference type="NCBI Taxonomy" id="170187"/>
    <lineage>
        <taxon>Bacteria</taxon>
        <taxon>Bacillati</taxon>
        <taxon>Bacillota</taxon>
        <taxon>Bacilli</taxon>
        <taxon>Lactobacillales</taxon>
        <taxon>Streptococcaceae</taxon>
        <taxon>Streptococcus</taxon>
    </lineage>
</organism>